<organism>
    <name type="scientific">Staphylococcus haemolyticus (strain JCSC1435)</name>
    <dbReference type="NCBI Taxonomy" id="279808"/>
    <lineage>
        <taxon>Bacteria</taxon>
        <taxon>Bacillati</taxon>
        <taxon>Bacillota</taxon>
        <taxon>Bacilli</taxon>
        <taxon>Bacillales</taxon>
        <taxon>Staphylococcaceae</taxon>
        <taxon>Staphylococcus</taxon>
    </lineage>
</organism>
<name>MNHE2_STAHJ</name>
<sequence>MRQVVLNILIAFLWVLFQDEDSFQFSTFVSGFIIGLIVIYILHRFFGQAFYPKKIWIAIKFLGVYLYQLITSSISIINYILFKTRHMNPGLLTYETNLKNDWAITFLTILIIITPGSTVIRISKTTNKFFIHSIDVSEKEKESLLKSIKQYENLITEVSQ</sequence>
<gene>
    <name type="primary">mnhE2</name>
    <name type="synonym">mrpE2</name>
    <name type="ordered locus">SH2271</name>
</gene>
<comment type="subunit">
    <text evidence="1">May form a heterooligomeric complex that consists of seven subunits: mnhA2, mnhB2, mnhC2, mnhD2, mnhE2, mnhF2 and mnhG2.</text>
</comment>
<comment type="subcellular location">
    <subcellularLocation>
        <location evidence="3">Cell membrane</location>
        <topology evidence="3">Multi-pass membrane protein</topology>
    </subcellularLocation>
</comment>
<comment type="similarity">
    <text evidence="3">Belongs to the CPA3 antiporters (TC 2.A.63) subunit E family.</text>
</comment>
<reference key="1">
    <citation type="journal article" date="2005" name="J. Bacteriol.">
        <title>Whole-genome sequencing of Staphylococcus haemolyticus uncovers the extreme plasticity of its genome and the evolution of human-colonizing staphylococcal species.</title>
        <authorList>
            <person name="Takeuchi F."/>
            <person name="Watanabe S."/>
            <person name="Baba T."/>
            <person name="Yuzawa H."/>
            <person name="Ito T."/>
            <person name="Morimoto Y."/>
            <person name="Kuroda M."/>
            <person name="Cui L."/>
            <person name="Takahashi M."/>
            <person name="Ankai A."/>
            <person name="Baba S."/>
            <person name="Fukui S."/>
            <person name="Lee J.C."/>
            <person name="Hiramatsu K."/>
        </authorList>
    </citation>
    <scope>NUCLEOTIDE SEQUENCE [LARGE SCALE GENOMIC DNA]</scope>
    <source>
        <strain>JCSC1435</strain>
    </source>
</reference>
<evidence type="ECO:0000250" key="1"/>
<evidence type="ECO:0000255" key="2"/>
<evidence type="ECO:0000305" key="3"/>
<feature type="chain" id="PRO_0000372226" description="Putative antiporter subunit mnhE2">
    <location>
        <begin position="1"/>
        <end position="160"/>
    </location>
</feature>
<feature type="transmembrane region" description="Helical" evidence="2">
    <location>
        <begin position="22"/>
        <end position="42"/>
    </location>
</feature>
<feature type="transmembrane region" description="Helical" evidence="2">
    <location>
        <begin position="61"/>
        <end position="81"/>
    </location>
</feature>
<feature type="transmembrane region" description="Helical" evidence="2">
    <location>
        <begin position="102"/>
        <end position="122"/>
    </location>
</feature>
<keyword id="KW-0050">Antiport</keyword>
<keyword id="KW-1003">Cell membrane</keyword>
<keyword id="KW-0406">Ion transport</keyword>
<keyword id="KW-0472">Membrane</keyword>
<keyword id="KW-0812">Transmembrane</keyword>
<keyword id="KW-1133">Transmembrane helix</keyword>
<keyword id="KW-0813">Transport</keyword>
<protein>
    <recommendedName>
        <fullName>Putative antiporter subunit mnhE2</fullName>
    </recommendedName>
    <alternativeName>
        <fullName>Mrp complex subunit E2</fullName>
    </alternativeName>
    <alternativeName>
        <fullName>Putative NADH-ubiquinone oxidoreductase subunit mnhE2</fullName>
    </alternativeName>
</protein>
<proteinExistence type="inferred from homology"/>
<dbReference type="EMBL" id="AP006716">
    <property type="protein sequence ID" value="BAE05580.1"/>
    <property type="molecule type" value="Genomic_DNA"/>
</dbReference>
<dbReference type="RefSeq" id="WP_011276530.1">
    <property type="nucleotide sequence ID" value="NC_007168.1"/>
</dbReference>
<dbReference type="SMR" id="Q4L447"/>
<dbReference type="GeneID" id="93781585"/>
<dbReference type="KEGG" id="sha:SH2271"/>
<dbReference type="eggNOG" id="COG1863">
    <property type="taxonomic scope" value="Bacteria"/>
</dbReference>
<dbReference type="HOGENOM" id="CLU_086615_3_2_9"/>
<dbReference type="OrthoDB" id="9800498at2"/>
<dbReference type="Proteomes" id="UP000000543">
    <property type="component" value="Chromosome"/>
</dbReference>
<dbReference type="GO" id="GO:0005886">
    <property type="term" value="C:plasma membrane"/>
    <property type="evidence" value="ECO:0007669"/>
    <property type="project" value="UniProtKB-SubCell"/>
</dbReference>
<dbReference type="GO" id="GO:0015297">
    <property type="term" value="F:antiporter activity"/>
    <property type="evidence" value="ECO:0007669"/>
    <property type="project" value="UniProtKB-KW"/>
</dbReference>
<dbReference type="GO" id="GO:0008324">
    <property type="term" value="F:monoatomic cation transmembrane transporter activity"/>
    <property type="evidence" value="ECO:0007669"/>
    <property type="project" value="InterPro"/>
</dbReference>
<dbReference type="InterPro" id="IPR002758">
    <property type="entry name" value="Cation_antiport_E"/>
</dbReference>
<dbReference type="NCBIfam" id="NF006517">
    <property type="entry name" value="PRK08965.1-1"/>
    <property type="match status" value="1"/>
</dbReference>
<dbReference type="PANTHER" id="PTHR34584">
    <property type="entry name" value="NA(+)/H(+) ANTIPORTER SUBUNIT E1"/>
    <property type="match status" value="1"/>
</dbReference>
<dbReference type="PANTHER" id="PTHR34584:SF1">
    <property type="entry name" value="NA(+)_H(+) ANTIPORTER SUBUNIT E1"/>
    <property type="match status" value="1"/>
</dbReference>
<dbReference type="Pfam" id="PF01899">
    <property type="entry name" value="MNHE"/>
    <property type="match status" value="1"/>
</dbReference>
<dbReference type="PIRSF" id="PIRSF019239">
    <property type="entry name" value="MrpE"/>
    <property type="match status" value="1"/>
</dbReference>
<accession>Q4L447</accession>